<protein>
    <recommendedName>
        <fullName evidence="1">Single-stranded DNA-binding protein</fullName>
        <shortName evidence="1">SSB</shortName>
    </recommendedName>
</protein>
<reference key="1">
    <citation type="journal article" date="2002" name="J. Bacteriol.">
        <title>Complete nucleotide sequence of plasmid Rts1: implications for evolution of large plasmid Genomes.</title>
        <authorList>
            <person name="Murata T."/>
            <person name="Ohnishi M."/>
            <person name="Ara T."/>
            <person name="Kaneko J."/>
            <person name="Han C.-G."/>
            <person name="Li Y.F."/>
            <person name="Takashima K."/>
            <person name="Nojima H."/>
            <person name="Nakayama K."/>
            <person name="Kaji A."/>
            <person name="Kamio Y."/>
            <person name="Miki T."/>
            <person name="Mori H."/>
            <person name="Ohtsubo E."/>
            <person name="Terawaki Y."/>
            <person name="Hayashi T."/>
        </authorList>
    </citation>
    <scope>NUCLEOTIDE SEQUENCE [GENOMIC DNA]</scope>
    <source>
        <strain>UR-75</strain>
    </source>
</reference>
<evidence type="ECO:0000255" key="1">
    <source>
        <dbReference type="HAMAP-Rule" id="MF_00984"/>
    </source>
</evidence>
<evidence type="ECO:0000256" key="2">
    <source>
        <dbReference type="SAM" id="MobiDB-lite"/>
    </source>
</evidence>
<geneLocation type="plasmid">
    <name>Rts1</name>
</geneLocation>
<organism>
    <name type="scientific">Proteus vulgaris</name>
    <dbReference type="NCBI Taxonomy" id="585"/>
    <lineage>
        <taxon>Bacteria</taxon>
        <taxon>Pseudomonadati</taxon>
        <taxon>Pseudomonadota</taxon>
        <taxon>Gammaproteobacteria</taxon>
        <taxon>Enterobacterales</taxon>
        <taxon>Morganellaceae</taxon>
        <taxon>Proteus</taxon>
    </lineage>
</organism>
<gene>
    <name type="primary">ssb</name>
    <name type="synonym">orf116</name>
</gene>
<keyword id="KW-0238">DNA-binding</keyword>
<keyword id="KW-0614">Plasmid</keyword>
<accession>Q8L2A6</accession>
<dbReference type="EMBL" id="AP004237">
    <property type="protein sequence ID" value="BAB93679.1"/>
    <property type="molecule type" value="Genomic_DNA"/>
</dbReference>
<dbReference type="RefSeq" id="NP_640077.1">
    <property type="nucleotide sequence ID" value="NC_003905.1"/>
</dbReference>
<dbReference type="RefSeq" id="WP_011039717.1">
    <property type="nucleotide sequence ID" value="NC_003905.1"/>
</dbReference>
<dbReference type="SMR" id="Q8L2A6"/>
<dbReference type="STRING" id="585.DR95_345"/>
<dbReference type="GeneID" id="89492221"/>
<dbReference type="GO" id="GO:0009295">
    <property type="term" value="C:nucleoid"/>
    <property type="evidence" value="ECO:0007669"/>
    <property type="project" value="TreeGrafter"/>
</dbReference>
<dbReference type="GO" id="GO:0003697">
    <property type="term" value="F:single-stranded DNA binding"/>
    <property type="evidence" value="ECO:0007669"/>
    <property type="project" value="UniProtKB-UniRule"/>
</dbReference>
<dbReference type="GO" id="GO:0006260">
    <property type="term" value="P:DNA replication"/>
    <property type="evidence" value="ECO:0007669"/>
    <property type="project" value="InterPro"/>
</dbReference>
<dbReference type="CDD" id="cd04496">
    <property type="entry name" value="SSB_OBF"/>
    <property type="match status" value="1"/>
</dbReference>
<dbReference type="FunFam" id="2.40.50.140:FF:000065">
    <property type="entry name" value="Single-stranded DNA-binding protein"/>
    <property type="match status" value="1"/>
</dbReference>
<dbReference type="Gene3D" id="2.40.50.140">
    <property type="entry name" value="Nucleic acid-binding proteins"/>
    <property type="match status" value="1"/>
</dbReference>
<dbReference type="HAMAP" id="MF_00984">
    <property type="entry name" value="SSB"/>
    <property type="match status" value="1"/>
</dbReference>
<dbReference type="InterPro" id="IPR012340">
    <property type="entry name" value="NA-bd_OB-fold"/>
</dbReference>
<dbReference type="InterPro" id="IPR000424">
    <property type="entry name" value="Primosome_PriB/ssb"/>
</dbReference>
<dbReference type="InterPro" id="IPR011344">
    <property type="entry name" value="ssDNA-bd"/>
</dbReference>
<dbReference type="NCBIfam" id="NF006533">
    <property type="entry name" value="PRK09010.1"/>
    <property type="match status" value="1"/>
</dbReference>
<dbReference type="NCBIfam" id="TIGR00621">
    <property type="entry name" value="ssb"/>
    <property type="match status" value="1"/>
</dbReference>
<dbReference type="PANTHER" id="PTHR10302">
    <property type="entry name" value="SINGLE-STRANDED DNA-BINDING PROTEIN"/>
    <property type="match status" value="1"/>
</dbReference>
<dbReference type="PANTHER" id="PTHR10302:SF27">
    <property type="entry name" value="SINGLE-STRANDED DNA-BINDING PROTEIN"/>
    <property type="match status" value="1"/>
</dbReference>
<dbReference type="Pfam" id="PF00436">
    <property type="entry name" value="SSB"/>
    <property type="match status" value="1"/>
</dbReference>
<dbReference type="SUPFAM" id="SSF50249">
    <property type="entry name" value="Nucleic acid-binding proteins"/>
    <property type="match status" value="1"/>
</dbReference>
<dbReference type="PROSITE" id="PS50935">
    <property type="entry name" value="SSB"/>
    <property type="match status" value="1"/>
</dbReference>
<feature type="chain" id="PRO_0000096077" description="Single-stranded DNA-binding protein">
    <location>
        <begin position="1"/>
        <end position="195"/>
    </location>
</feature>
<feature type="domain" description="SSB" evidence="1">
    <location>
        <begin position="6"/>
        <end position="111"/>
    </location>
</feature>
<feature type="DNA-binding region" evidence="1">
    <location>
        <begin position="55"/>
        <end position="61"/>
    </location>
</feature>
<feature type="region of interest" description="Disordered" evidence="2">
    <location>
        <begin position="111"/>
        <end position="176"/>
    </location>
</feature>
<feature type="compositionally biased region" description="Low complexity" evidence="2">
    <location>
        <begin position="119"/>
        <end position="163"/>
    </location>
</feature>
<name>SSB_PROVU</name>
<proteinExistence type="inferred from homology"/>
<sequence>MASRGVNKVILVGNVGQDPEVRYMPNGGAVANLTLATSETWRDKQTGESKEKTEWHRVVLFGKLAEITGEFVKKGSQIYIEGALQTRKWTDQAGVEKYTTEVVVNVGGTMQMLGGRQGGNDNQNNNAGSNQGWGQPQQPQPNNNQTPAQQLNQRSQGQNQPQGHGNSSQPIDFNDDIPFAGLGASFGKHTIHAIC</sequence>
<comment type="subunit">
    <text evidence="1">Homotetramer.</text>
</comment>